<comment type="function">
    <text evidence="1">Catalyzes the transformation of pimelate into pimeloyl-CoA with concomitant hydrolysis of ATP to AMP.</text>
</comment>
<comment type="catalytic activity">
    <reaction evidence="1">
        <text>heptanedioate + ATP + CoA = 6-carboxyhexanoyl-CoA + AMP + diphosphate</text>
        <dbReference type="Rhea" id="RHEA:14781"/>
        <dbReference type="ChEBI" id="CHEBI:30616"/>
        <dbReference type="ChEBI" id="CHEBI:33019"/>
        <dbReference type="ChEBI" id="CHEBI:36165"/>
        <dbReference type="ChEBI" id="CHEBI:57287"/>
        <dbReference type="ChEBI" id="CHEBI:57360"/>
        <dbReference type="ChEBI" id="CHEBI:456215"/>
        <dbReference type="EC" id="6.2.1.14"/>
    </reaction>
</comment>
<comment type="cofactor">
    <cofactor evidence="1">
        <name>Mg(2+)</name>
        <dbReference type="ChEBI" id="CHEBI:18420"/>
    </cofactor>
</comment>
<comment type="pathway">
    <text evidence="1">Metabolic intermediate metabolism; pimeloyl-CoA biosynthesis; pimeloyl-CoA from pimelate: step 1/1.</text>
</comment>
<comment type="subunit">
    <text evidence="1">Homodimer.</text>
</comment>
<comment type="similarity">
    <text evidence="1">Belongs to the BioW family.</text>
</comment>
<organism>
    <name type="scientific">Methanocaldococcus jannaschii (strain ATCC 43067 / DSM 2661 / JAL-1 / JCM 10045 / NBRC 100440)</name>
    <name type="common">Methanococcus jannaschii</name>
    <dbReference type="NCBI Taxonomy" id="243232"/>
    <lineage>
        <taxon>Archaea</taxon>
        <taxon>Methanobacteriati</taxon>
        <taxon>Methanobacteriota</taxon>
        <taxon>Methanomada group</taxon>
        <taxon>Methanococci</taxon>
        <taxon>Methanococcales</taxon>
        <taxon>Methanocaldococcaceae</taxon>
        <taxon>Methanocaldococcus</taxon>
    </lineage>
</organism>
<gene>
    <name evidence="1" type="primary">bioW</name>
    <name type="ordered locus">MJ1297</name>
</gene>
<evidence type="ECO:0000255" key="1">
    <source>
        <dbReference type="HAMAP-Rule" id="MF_00668"/>
    </source>
</evidence>
<sequence length="237" mass="26884">MVIVMYSIKMRASKNGKHISGAERIVNKDEIEETVKELVRRALTHENGTPDFINIKIEEIKEEITYINHLPIKTIHCKDKEEARETAKKILRNEGIPDSVIDYAYEIIDKGGMRGAAILNLKGERLEPDKERGVRVKNIDTTKELKEKILKENLGTERTVDAIAIASKVIHLGVIAELCTSDNKSYTTGYVATKKGYFRITNLKKEGESGGRVFFVKDDVDIEDLINKLENKPFIIK</sequence>
<name>BIOW_METJA</name>
<accession>Q58693</accession>
<proteinExistence type="inferred from homology"/>
<protein>
    <recommendedName>
        <fullName evidence="1">6-carboxyhexanoate--CoA ligase</fullName>
        <ecNumber evidence="1">6.2.1.14</ecNumber>
    </recommendedName>
    <alternativeName>
        <fullName evidence="1">Pimeloyl-CoA synthase</fullName>
    </alternativeName>
</protein>
<dbReference type="EC" id="6.2.1.14" evidence="1"/>
<dbReference type="EMBL" id="L77117">
    <property type="protein sequence ID" value="AAB99304.1"/>
    <property type="molecule type" value="Genomic_DNA"/>
</dbReference>
<dbReference type="PIR" id="H64461">
    <property type="entry name" value="H64461"/>
</dbReference>
<dbReference type="SMR" id="Q58693"/>
<dbReference type="FunCoup" id="Q58693">
    <property type="interactions" value="110"/>
</dbReference>
<dbReference type="STRING" id="243232.MJ_1297"/>
<dbReference type="PaxDb" id="243232-MJ_1297"/>
<dbReference type="DNASU" id="1452199"/>
<dbReference type="EnsemblBacteria" id="AAB99304">
    <property type="protein sequence ID" value="AAB99304"/>
    <property type="gene ID" value="MJ_1297"/>
</dbReference>
<dbReference type="KEGG" id="mja:MJ_1297"/>
<dbReference type="eggNOG" id="arCOG05075">
    <property type="taxonomic scope" value="Archaea"/>
</dbReference>
<dbReference type="HOGENOM" id="CLU_076858_0_0_2"/>
<dbReference type="InParanoid" id="Q58693"/>
<dbReference type="PhylomeDB" id="Q58693"/>
<dbReference type="UniPathway" id="UPA00999">
    <property type="reaction ID" value="UER00351"/>
</dbReference>
<dbReference type="Proteomes" id="UP000000805">
    <property type="component" value="Chromosome"/>
</dbReference>
<dbReference type="GO" id="GO:0042410">
    <property type="term" value="F:6-carboxyhexanoate-CoA ligase activity"/>
    <property type="evidence" value="ECO:0007669"/>
    <property type="project" value="UniProtKB-UniRule"/>
</dbReference>
<dbReference type="GO" id="GO:0005524">
    <property type="term" value="F:ATP binding"/>
    <property type="evidence" value="ECO:0007669"/>
    <property type="project" value="UniProtKB-KW"/>
</dbReference>
<dbReference type="GO" id="GO:0000287">
    <property type="term" value="F:magnesium ion binding"/>
    <property type="evidence" value="ECO:0007669"/>
    <property type="project" value="UniProtKB-UniRule"/>
</dbReference>
<dbReference type="GO" id="GO:0009102">
    <property type="term" value="P:biotin biosynthetic process"/>
    <property type="evidence" value="ECO:0007669"/>
    <property type="project" value="UniProtKB-UniRule"/>
</dbReference>
<dbReference type="HAMAP" id="MF_00668">
    <property type="entry name" value="BioW"/>
    <property type="match status" value="1"/>
</dbReference>
<dbReference type="InterPro" id="IPR005499">
    <property type="entry name" value="BioW"/>
</dbReference>
<dbReference type="NCBIfam" id="TIGR01204">
    <property type="entry name" value="bioW"/>
    <property type="match status" value="1"/>
</dbReference>
<dbReference type="NCBIfam" id="NF002360">
    <property type="entry name" value="PRK01322.1"/>
    <property type="match status" value="1"/>
</dbReference>
<dbReference type="Pfam" id="PF03744">
    <property type="entry name" value="BioW"/>
    <property type="match status" value="1"/>
</dbReference>
<feature type="chain" id="PRO_0000191025" description="6-carboxyhexanoate--CoA ligase">
    <location>
        <begin position="1"/>
        <end position="237"/>
    </location>
</feature>
<reference key="1">
    <citation type="journal article" date="1996" name="Science">
        <title>Complete genome sequence of the methanogenic archaeon, Methanococcus jannaschii.</title>
        <authorList>
            <person name="Bult C.J."/>
            <person name="White O."/>
            <person name="Olsen G.J."/>
            <person name="Zhou L."/>
            <person name="Fleischmann R.D."/>
            <person name="Sutton G.G."/>
            <person name="Blake J.A."/>
            <person name="FitzGerald L.M."/>
            <person name="Clayton R.A."/>
            <person name="Gocayne J.D."/>
            <person name="Kerlavage A.R."/>
            <person name="Dougherty B.A."/>
            <person name="Tomb J.-F."/>
            <person name="Adams M.D."/>
            <person name="Reich C.I."/>
            <person name="Overbeek R."/>
            <person name="Kirkness E.F."/>
            <person name="Weinstock K.G."/>
            <person name="Merrick J.M."/>
            <person name="Glodek A."/>
            <person name="Scott J.L."/>
            <person name="Geoghagen N.S.M."/>
            <person name="Weidman J.F."/>
            <person name="Fuhrmann J.L."/>
            <person name="Nguyen D."/>
            <person name="Utterback T.R."/>
            <person name="Kelley J.M."/>
            <person name="Peterson J.D."/>
            <person name="Sadow P.W."/>
            <person name="Hanna M.C."/>
            <person name="Cotton M.D."/>
            <person name="Roberts K.M."/>
            <person name="Hurst M.A."/>
            <person name="Kaine B.P."/>
            <person name="Borodovsky M."/>
            <person name="Klenk H.-P."/>
            <person name="Fraser C.M."/>
            <person name="Smith H.O."/>
            <person name="Woese C.R."/>
            <person name="Venter J.C."/>
        </authorList>
    </citation>
    <scope>NUCLEOTIDE SEQUENCE [LARGE SCALE GENOMIC DNA]</scope>
    <source>
        <strain>ATCC 43067 / DSM 2661 / JAL-1 / JCM 10045 / NBRC 100440</strain>
    </source>
</reference>
<keyword id="KW-0067">ATP-binding</keyword>
<keyword id="KW-0093">Biotin biosynthesis</keyword>
<keyword id="KW-0436">Ligase</keyword>
<keyword id="KW-0460">Magnesium</keyword>
<keyword id="KW-0547">Nucleotide-binding</keyword>
<keyword id="KW-1185">Reference proteome</keyword>